<sequence>MLNILEVHETNQMIEQEKLDVRTITMGIDLMDCVSTDLQTTCDLIYNKITSYAKDLVSTGESIERDFGIPIVNKRITVTPIALVGASCCKTSADFVQIAHALDRAAKTVGVDLIGGYSALVSKSMTPAEELLIRSLPAALSETDIVCSSVNVGSTKTGIDMNSVELLGHIIKEIAEATADIDSYGCVKFVAFCNAPDDNPFMAGGFHGVTEGDAVINVGVSGPGVVSRALDAAKGKDFEFLCETIKRTAFKITRVGQLVAQEASKRLGIPFGIIDLSLAPTPAVGDSVGEVLEKIGLAQVGAPGTTAALAMLNDQVKKGGIMASSYVGGLSGAFIPVSEDKNMIDAAESGCLTIEKLEAMTCVCSVGLDMIAIPGDTTASTISGIIADEAAIGMVNQKTTAVRVIPVVGKTVGQMANFGGLMGYAPIMPVNTASCEAFVTRGGRIPAPIHSFKN</sequence>
<organism>
    <name type="scientific">Bifidobacterium animalis subsp. lactis (strain AD011)</name>
    <dbReference type="NCBI Taxonomy" id="442563"/>
    <lineage>
        <taxon>Bacteria</taxon>
        <taxon>Bacillati</taxon>
        <taxon>Actinomycetota</taxon>
        <taxon>Actinomycetes</taxon>
        <taxon>Bifidobacteriales</taxon>
        <taxon>Bifidobacteriaceae</taxon>
        <taxon>Bifidobacterium</taxon>
    </lineage>
</organism>
<gene>
    <name type="ordered locus">BLA_0552</name>
</gene>
<accession>B8DWK0</accession>
<feature type="chain" id="PRO_1000164862" description="UPF0210 protein BLA_0552">
    <location>
        <begin position="1"/>
        <end position="454"/>
    </location>
</feature>
<dbReference type="EMBL" id="CP001213">
    <property type="protein sequence ID" value="ACL28851.1"/>
    <property type="molecule type" value="Genomic_DNA"/>
</dbReference>
<dbReference type="RefSeq" id="WP_004218276.1">
    <property type="nucleotide sequence ID" value="NC_011835.1"/>
</dbReference>
<dbReference type="SMR" id="B8DWK0"/>
<dbReference type="STRING" id="442563.BLA_0552"/>
<dbReference type="KEGG" id="bla:BLA_0552"/>
<dbReference type="HOGENOM" id="CLU_048704_0_0_11"/>
<dbReference type="Proteomes" id="UP000002456">
    <property type="component" value="Chromosome"/>
</dbReference>
<dbReference type="CDD" id="cd08025">
    <property type="entry name" value="RNR_PFL_like_DUF711"/>
    <property type="match status" value="1"/>
</dbReference>
<dbReference type="Gene3D" id="3.20.70.20">
    <property type="match status" value="1"/>
</dbReference>
<dbReference type="HAMAP" id="MF_01221">
    <property type="entry name" value="UPF0210"/>
    <property type="match status" value="1"/>
</dbReference>
<dbReference type="InterPro" id="IPR007841">
    <property type="entry name" value="UPF0210"/>
</dbReference>
<dbReference type="NCBIfam" id="NF003700">
    <property type="entry name" value="PRK05313.1"/>
    <property type="match status" value="1"/>
</dbReference>
<dbReference type="PANTHER" id="PTHR37560:SF1">
    <property type="entry name" value="UPF0210 PROTEIN MJ1665"/>
    <property type="match status" value="1"/>
</dbReference>
<dbReference type="PANTHER" id="PTHR37560">
    <property type="entry name" value="UPF0210 PROTEIN SPR0218"/>
    <property type="match status" value="1"/>
</dbReference>
<dbReference type="Pfam" id="PF05167">
    <property type="entry name" value="DUF711"/>
    <property type="match status" value="1"/>
</dbReference>
<dbReference type="SUPFAM" id="SSF51998">
    <property type="entry name" value="PFL-like glycyl radical enzymes"/>
    <property type="match status" value="1"/>
</dbReference>
<name>Y552_BIFA0</name>
<proteinExistence type="inferred from homology"/>
<evidence type="ECO:0000255" key="1">
    <source>
        <dbReference type="HAMAP-Rule" id="MF_01221"/>
    </source>
</evidence>
<keyword id="KW-1185">Reference proteome</keyword>
<comment type="subunit">
    <text evidence="1">Homodimer.</text>
</comment>
<comment type="similarity">
    <text evidence="1">Belongs to the UPF0210 family.</text>
</comment>
<protein>
    <recommendedName>
        <fullName evidence="1">UPF0210 protein BLA_0552</fullName>
    </recommendedName>
</protein>
<reference key="1">
    <citation type="journal article" date="2009" name="J. Bacteriol.">
        <title>Genome sequence of the probiotic bacterium Bifidobacterium animalis subsp. lactis AD011.</title>
        <authorList>
            <person name="Kim J.F."/>
            <person name="Jeong H."/>
            <person name="Yu D.S."/>
            <person name="Choi S.-H."/>
            <person name="Hur C.-G."/>
            <person name="Park M.-S."/>
            <person name="Yoon S.H."/>
            <person name="Kim D.-W."/>
            <person name="Ji G.E."/>
            <person name="Park H.-S."/>
            <person name="Oh T.K."/>
        </authorList>
    </citation>
    <scope>NUCLEOTIDE SEQUENCE [LARGE SCALE GENOMIC DNA]</scope>
    <source>
        <strain>AD011</strain>
    </source>
</reference>